<organism>
    <name type="scientific">Paracoccidioides lutzii (strain ATCC MYA-826 / Pb01)</name>
    <name type="common">Paracoccidioides brasiliensis</name>
    <dbReference type="NCBI Taxonomy" id="502779"/>
    <lineage>
        <taxon>Eukaryota</taxon>
        <taxon>Fungi</taxon>
        <taxon>Dikarya</taxon>
        <taxon>Ascomycota</taxon>
        <taxon>Pezizomycotina</taxon>
        <taxon>Eurotiomycetes</taxon>
        <taxon>Eurotiomycetidae</taxon>
        <taxon>Onygenales</taxon>
        <taxon>Ajellomycetaceae</taxon>
        <taxon>Paracoccidioides</taxon>
    </lineage>
</organism>
<reference key="1">
    <citation type="journal article" date="2011" name="PLoS Genet.">
        <title>Comparative genomic analysis of human fungal pathogens causing paracoccidioidomycosis.</title>
        <authorList>
            <person name="Desjardins C.A."/>
            <person name="Champion M.D."/>
            <person name="Holder J.W."/>
            <person name="Muszewska A."/>
            <person name="Goldberg J."/>
            <person name="Bailao A.M."/>
            <person name="Brigido M.M."/>
            <person name="Ferreira M.E."/>
            <person name="Garcia A.M."/>
            <person name="Grynberg M."/>
            <person name="Gujja S."/>
            <person name="Heiman D.I."/>
            <person name="Henn M.R."/>
            <person name="Kodira C.D."/>
            <person name="Leon-Narvaez H."/>
            <person name="Longo L.V.G."/>
            <person name="Ma L.-J."/>
            <person name="Malavazi I."/>
            <person name="Matsuo A.L."/>
            <person name="Morais F.V."/>
            <person name="Pereira M."/>
            <person name="Rodriguez-Brito S."/>
            <person name="Sakthikumar S."/>
            <person name="Salem-Izacc S.M."/>
            <person name="Sykes S.M."/>
            <person name="Teixeira M.M."/>
            <person name="Vallejo M.C."/>
            <person name="Walter M.E."/>
            <person name="Yandava C."/>
            <person name="Young S."/>
            <person name="Zeng Q."/>
            <person name="Zucker J."/>
            <person name="Felipe M.S."/>
            <person name="Goldman G.H."/>
            <person name="Haas B.J."/>
            <person name="McEwen J.G."/>
            <person name="Nino-Vega G."/>
            <person name="Puccia R."/>
            <person name="San-Blas G."/>
            <person name="Soares C.M."/>
            <person name="Birren B.W."/>
            <person name="Cuomo C.A."/>
        </authorList>
    </citation>
    <scope>NUCLEOTIDE SEQUENCE [LARGE SCALE GENOMIC DNA]</scope>
    <source>
        <strain>ATCC MYA-826 / Pb01</strain>
    </source>
</reference>
<keyword id="KW-0256">Endoplasmic reticulum</keyword>
<keyword id="KW-0342">GTP-binding</keyword>
<keyword id="KW-0378">Hydrolase</keyword>
<keyword id="KW-0472">Membrane</keyword>
<keyword id="KW-0547">Nucleotide-binding</keyword>
<keyword id="KW-1185">Reference proteome</keyword>
<keyword id="KW-0812">Transmembrane</keyword>
<keyword id="KW-1133">Transmembrane helix</keyword>
<comment type="function">
    <text evidence="1">Cooperates with the reticulon proteins and tubule-shaping DP1 family proteins to generate and maintain the structure of the tubular endoplasmic reticulum network. Has GTPase activity, which is required for its function in ER organization.</text>
</comment>
<comment type="subcellular location">
    <subcellularLocation>
        <location evidence="1">Endoplasmic reticulum membrane</location>
        <topology evidence="1">Multi-pass membrane protein</topology>
    </subcellularLocation>
    <text evidence="1">Enriched in the cortical ER. Concentrated in punctae along the ER tubules.</text>
</comment>
<comment type="similarity">
    <text evidence="2">Belongs to the TRAFAC class dynamin-like GTPase superfamily. GB1/RHD3 GTPase family. RHD3 subfamily.</text>
</comment>
<feature type="chain" id="PRO_0000384989" description="Protein SEY1">
    <location>
        <begin position="1"/>
        <end position="873"/>
    </location>
</feature>
<feature type="topological domain" description="Cytoplasmic" evidence="1">
    <location>
        <begin position="1"/>
        <end position="750"/>
    </location>
</feature>
<feature type="transmembrane region" description="Helical" evidence="1">
    <location>
        <begin position="751"/>
        <end position="771"/>
    </location>
</feature>
<feature type="topological domain" description="Lumenal" evidence="1">
    <location>
        <begin position="772"/>
        <end position="774"/>
    </location>
</feature>
<feature type="transmembrane region" description="Helical" evidence="1">
    <location>
        <begin position="775"/>
        <end position="795"/>
    </location>
</feature>
<feature type="topological domain" description="Cytoplasmic" evidence="1">
    <location>
        <begin position="796"/>
        <end position="873"/>
    </location>
</feature>
<feature type="domain" description="GB1/RHD3-type G" evidence="2">
    <location>
        <begin position="50"/>
        <end position="308"/>
    </location>
</feature>
<feature type="region of interest" description="Disordered" evidence="3">
    <location>
        <begin position="677"/>
        <end position="701"/>
    </location>
</feature>
<feature type="region of interest" description="Disordered" evidence="3">
    <location>
        <begin position="841"/>
        <end position="873"/>
    </location>
</feature>
<feature type="compositionally biased region" description="Acidic residues" evidence="3">
    <location>
        <begin position="691"/>
        <end position="701"/>
    </location>
</feature>
<feature type="binding site" evidence="1">
    <location>
        <begin position="60"/>
        <end position="67"/>
    </location>
    <ligand>
        <name>GTP</name>
        <dbReference type="ChEBI" id="CHEBI:37565"/>
    </ligand>
</feature>
<evidence type="ECO:0000255" key="1">
    <source>
        <dbReference type="HAMAP-Rule" id="MF_03109"/>
    </source>
</evidence>
<evidence type="ECO:0000255" key="2">
    <source>
        <dbReference type="PROSITE-ProRule" id="PRU01052"/>
    </source>
</evidence>
<evidence type="ECO:0000256" key="3">
    <source>
        <dbReference type="SAM" id="MobiDB-lite"/>
    </source>
</evidence>
<gene>
    <name evidence="1" type="primary">SEY1</name>
    <name type="ORF">PAAG_02917</name>
</gene>
<sequence>MVANGHFFAGVGDVLDGKNYEHGVQVVDEEKEFNPNLSNYLTYENVTPAGFNYHLISVFGSQSTGKSTLLNSLFGTHFSVMSETERRQTTKGIWLSKNKGLKSDKGQDNQTKMADNILVMDVEGTDGRERGEDQDFERKSALFALATSEVLIVNIWEHQVGLYQGANMGLLKTVFEVNLELFLKDKRSNPRSLLFFVIRDFLGTTPLQNLQNTLLQDLNRIWNSLSKPAGLENSSITDYFDFAFAGLPHKNFQPEKFVDEVQKLSTRFCDGHRDPNKTDAKGTGSIEGGIFLPEYHRRIPADGFAVYAEGIWDQIVNNKDLDLPTQQELLAQFRCDEISREVLVAFDEAISPFEAKQAEAVQAGNPQVLGGLGSAMRNARMKSVKNFDTEASRYHKRVYQMKKSELQDKIDFRLKALFLGQLSAAHRSGIQEFTESVTAAVKAGQKRGASYDFAEIVKKERKLAIEKFEQEARATVVEDTQWSNYQQELSLYQKDLEIIGGQLRRDEMRRLATRVERWVRSRLGESIDLEFNAIGSGRSGSGAPEFGDKPSEKSLWDRVWTLFIDIVLDAERRFTERASSFDASIDEVDVGLWRLRRKSWGVLRAKIDEEMMEGNILLKLRENFEDKFRYDDAGVPRIWRPNDDIESIYTRARESTLTLIPLLSRFRLSETNAPPPLDKWIGHTPSSATPADEEDLTPIGGVDEDEGKSLEEEMTMIGEAKKQDLTVRFKKTADGVYVEAKRSAIGGITQVPLYFYGLLLALGWNEIVAVLRNPAYFLLLFVCAVTAYVTYQLNLWGPIIKMTEAASQQALMEGKRRLREFLEASDTGLQTMAMSEGRNAEGYDMSNMKNRKSAGGYQNNRSHIDDADDDDDF</sequence>
<proteinExistence type="inferred from homology"/>
<name>SEY1_PARBA</name>
<dbReference type="EC" id="3.6.5.-" evidence="1"/>
<dbReference type="EMBL" id="KN293997">
    <property type="protein sequence ID" value="EEH40941.2"/>
    <property type="molecule type" value="Genomic_DNA"/>
</dbReference>
<dbReference type="RefSeq" id="XP_002795441.2">
    <property type="nucleotide sequence ID" value="XM_002795395.2"/>
</dbReference>
<dbReference type="SMR" id="C1GWM2"/>
<dbReference type="STRING" id="502779.C1GWM2"/>
<dbReference type="GeneID" id="9098658"/>
<dbReference type="KEGG" id="pbl:PAAG_02917"/>
<dbReference type="VEuPathDB" id="FungiDB:PAAG_02917"/>
<dbReference type="eggNOG" id="KOG2203">
    <property type="taxonomic scope" value="Eukaryota"/>
</dbReference>
<dbReference type="HOGENOM" id="CLU_011270_0_0_1"/>
<dbReference type="OMA" id="PIIKMTE"/>
<dbReference type="OrthoDB" id="1597724at2759"/>
<dbReference type="Proteomes" id="UP000002059">
    <property type="component" value="Partially assembled WGS sequence"/>
</dbReference>
<dbReference type="GO" id="GO:0005789">
    <property type="term" value="C:endoplasmic reticulum membrane"/>
    <property type="evidence" value="ECO:0007669"/>
    <property type="project" value="UniProtKB-SubCell"/>
</dbReference>
<dbReference type="GO" id="GO:0005525">
    <property type="term" value="F:GTP binding"/>
    <property type="evidence" value="ECO:0007669"/>
    <property type="project" value="UniProtKB-UniRule"/>
</dbReference>
<dbReference type="GO" id="GO:0003924">
    <property type="term" value="F:GTPase activity"/>
    <property type="evidence" value="ECO:0007669"/>
    <property type="project" value="UniProtKB-UniRule"/>
</dbReference>
<dbReference type="GO" id="GO:0016320">
    <property type="term" value="P:endoplasmic reticulum membrane fusion"/>
    <property type="evidence" value="ECO:0007669"/>
    <property type="project" value="TreeGrafter"/>
</dbReference>
<dbReference type="CDD" id="cd01851">
    <property type="entry name" value="GBP"/>
    <property type="match status" value="1"/>
</dbReference>
<dbReference type="FunFam" id="3.40.50.300:FF:000727">
    <property type="entry name" value="Protein SEY1 homolog"/>
    <property type="match status" value="1"/>
</dbReference>
<dbReference type="Gene3D" id="3.40.50.300">
    <property type="entry name" value="P-loop containing nucleotide triphosphate hydrolases"/>
    <property type="match status" value="1"/>
</dbReference>
<dbReference type="HAMAP" id="MF_03109">
    <property type="entry name" value="Sey1"/>
    <property type="match status" value="1"/>
</dbReference>
<dbReference type="InterPro" id="IPR030386">
    <property type="entry name" value="G_GB1_RHD3_dom"/>
</dbReference>
<dbReference type="InterPro" id="IPR027417">
    <property type="entry name" value="P-loop_NTPase"/>
</dbReference>
<dbReference type="InterPro" id="IPR008803">
    <property type="entry name" value="RHD3/Sey1"/>
</dbReference>
<dbReference type="InterPro" id="IPR046758">
    <property type="entry name" value="Sey1/RHD3-like_3HB"/>
</dbReference>
<dbReference type="PANTHER" id="PTHR45923">
    <property type="entry name" value="PROTEIN SEY1"/>
    <property type="match status" value="1"/>
</dbReference>
<dbReference type="PANTHER" id="PTHR45923:SF2">
    <property type="entry name" value="PROTEIN SEY1"/>
    <property type="match status" value="1"/>
</dbReference>
<dbReference type="Pfam" id="PF05879">
    <property type="entry name" value="RHD3_GTPase"/>
    <property type="match status" value="1"/>
</dbReference>
<dbReference type="Pfam" id="PF20428">
    <property type="entry name" value="Sey1_3HB"/>
    <property type="match status" value="1"/>
</dbReference>
<dbReference type="SUPFAM" id="SSF52540">
    <property type="entry name" value="P-loop containing nucleoside triphosphate hydrolases"/>
    <property type="match status" value="1"/>
</dbReference>
<dbReference type="PROSITE" id="PS51715">
    <property type="entry name" value="G_GB1_RHD3"/>
    <property type="match status" value="1"/>
</dbReference>
<accession>C1GWM2</accession>
<protein>
    <recommendedName>
        <fullName evidence="1">Protein SEY1</fullName>
        <ecNumber evidence="1">3.6.5.-</ecNumber>
    </recommendedName>
</protein>